<comment type="subcellular location">
    <subcellularLocation>
        <location evidence="2">Mitochondrion membrane</location>
        <topology evidence="2">Single-pass membrane protein</topology>
    </subcellularLocation>
</comment>
<comment type="similarity">
    <text evidence="2">Belongs to the AIM39 family.</text>
</comment>
<proteinExistence type="inferred from homology"/>
<keyword id="KW-0472">Membrane</keyword>
<keyword id="KW-0496">Mitochondrion</keyword>
<keyword id="KW-0809">Transit peptide</keyword>
<keyword id="KW-0812">Transmembrane</keyword>
<keyword id="KW-1133">Transmembrane helix</keyword>
<sequence>MWGLCKNHFPSNKIQVQERNKALKPKKSGSEHKTKQLFPVFNCKKKEKGVMIRFAILRNANTSLLSARSICLFTQAPTYCHVRLNTLNKSITTKRNSLTESKRHVHDGKHFFTTPHQQQQTKLGEIEEGHSPNIKGEDLRSIGQAITHQRNKRRKQIWSAIFGGIFGVILGYSLIYRVIYLKEQSFLPLFPSSKIRKLSTRDLKKVDVNQVQKLSKLRVLEILSGHDMIKEQYGVPLLDKDGNSPTLNEFSMWCEDQDPCVTGIVMEPDDKRDSSHTWYRIPFVCKWRITHRPISIRGTIDDLLNRIGLETADLFEIISPERVYGSFKYEYPLQGDSHALHLWFHGEIELDDDSLIVYNGKYHVDVKLQEIDLFRREKNGQLIQYVLYKNEAGDK</sequence>
<protein>
    <recommendedName>
        <fullName>Altered inheritance of mitochondria protein 39, mitochondrial</fullName>
    </recommendedName>
</protein>
<dbReference type="EMBL" id="ABSV01002105">
    <property type="protein sequence ID" value="EDZ69446.1"/>
    <property type="molecule type" value="Genomic_DNA"/>
</dbReference>
<dbReference type="SMR" id="B5VRJ9"/>
<dbReference type="Proteomes" id="UP000008988">
    <property type="component" value="Unassembled WGS sequence"/>
</dbReference>
<dbReference type="GO" id="GO:0031966">
    <property type="term" value="C:mitochondrial membrane"/>
    <property type="evidence" value="ECO:0007669"/>
    <property type="project" value="UniProtKB-SubCell"/>
</dbReference>
<evidence type="ECO:0000255" key="1"/>
<evidence type="ECO:0000305" key="2"/>
<feature type="transit peptide" description="Mitochondrion" evidence="1">
    <location>
        <begin position="1"/>
        <end status="unknown"/>
    </location>
</feature>
<feature type="chain" id="PRO_0000399849" description="Altered inheritance of mitochondria protein 39, mitochondrial">
    <location>
        <begin status="unknown"/>
        <end position="395"/>
    </location>
</feature>
<feature type="transmembrane region" description="Helical" evidence="1">
    <location>
        <begin position="156"/>
        <end position="176"/>
    </location>
</feature>
<gene>
    <name type="primary">AIM39</name>
    <name type="ORF">AWRI1631_151070</name>
</gene>
<name>AIM39_YEAS6</name>
<reference key="1">
    <citation type="journal article" date="2008" name="FEMS Yeast Res.">
        <title>Comparative genome analysis of a Saccharomyces cerevisiae wine strain.</title>
        <authorList>
            <person name="Borneman A.R."/>
            <person name="Forgan A.H."/>
            <person name="Pretorius I.S."/>
            <person name="Chambers P.J."/>
        </authorList>
    </citation>
    <scope>NUCLEOTIDE SEQUENCE [LARGE SCALE GENOMIC DNA]</scope>
    <source>
        <strain>AWRI1631</strain>
    </source>
</reference>
<accession>B5VRJ9</accession>
<organism>
    <name type="scientific">Saccharomyces cerevisiae (strain AWRI1631)</name>
    <name type="common">Baker's yeast</name>
    <dbReference type="NCBI Taxonomy" id="545124"/>
    <lineage>
        <taxon>Eukaryota</taxon>
        <taxon>Fungi</taxon>
        <taxon>Dikarya</taxon>
        <taxon>Ascomycota</taxon>
        <taxon>Saccharomycotina</taxon>
        <taxon>Saccharomycetes</taxon>
        <taxon>Saccharomycetales</taxon>
        <taxon>Saccharomycetaceae</taxon>
        <taxon>Saccharomyces</taxon>
    </lineage>
</organism>